<evidence type="ECO:0000255" key="1">
    <source>
        <dbReference type="HAMAP-Rule" id="MF_00807"/>
    </source>
</evidence>
<keyword id="KW-0378">Hydrolase</keyword>
<keyword id="KW-0663">Pyridoxal phosphate</keyword>
<keyword id="KW-1185">Reference proteome</keyword>
<organism>
    <name type="scientific">Pseudomonas syringae pv. tomato (strain ATCC BAA-871 / DC3000)</name>
    <dbReference type="NCBI Taxonomy" id="223283"/>
    <lineage>
        <taxon>Bacteria</taxon>
        <taxon>Pseudomonadati</taxon>
        <taxon>Pseudomonadota</taxon>
        <taxon>Gammaproteobacteria</taxon>
        <taxon>Pseudomonadales</taxon>
        <taxon>Pseudomonadaceae</taxon>
        <taxon>Pseudomonas</taxon>
    </lineage>
</organism>
<accession>Q87YW7</accession>
<comment type="function">
    <text evidence="1">Catalyzes a cyclopropane ring-opening reaction, the irreversible conversion of 1-aminocyclopropane-1-carboxylate (ACC) to ammonia and alpha-ketobutyrate. Allows growth on ACC as a nitrogen source.</text>
</comment>
<comment type="catalytic activity">
    <reaction evidence="1">
        <text>1-aminocyclopropane-1-carboxylate + H2O = 2-oxobutanoate + NH4(+)</text>
        <dbReference type="Rhea" id="RHEA:16933"/>
        <dbReference type="ChEBI" id="CHEBI:15377"/>
        <dbReference type="ChEBI" id="CHEBI:16763"/>
        <dbReference type="ChEBI" id="CHEBI:28938"/>
        <dbReference type="ChEBI" id="CHEBI:58360"/>
        <dbReference type="EC" id="3.5.99.7"/>
    </reaction>
</comment>
<comment type="cofactor">
    <cofactor evidence="1">
        <name>pyridoxal 5'-phosphate</name>
        <dbReference type="ChEBI" id="CHEBI:597326"/>
    </cofactor>
</comment>
<comment type="subunit">
    <text evidence="1">Homotrimer.</text>
</comment>
<comment type="similarity">
    <text evidence="1">Belongs to the ACC deaminase/D-cysteine desulfhydrase family.</text>
</comment>
<sequence length="338" mass="36851">MNLSKFKRYPLTFGPSPITPLKRLSEHLGGKVDLYAKREDCNSGLAFGGNKTRKLEYLVPEAIEGGYDTLVSIGGIQSNQTRQVAAVAAHLGMKCVLVQENWVNYSDALYDRVGNIEMSRIMGADVRLDSAGFDIGIRPSWEKAMADVVESGGKPFPIPAGCSEHPYGGLGFVRFADEVRQQEEELGFKFDYIVVCSVTGSTHAGMLVGFAADGRAQRVIGIDASAKPDKTREQVLRIAQNTAKLVDLGREITAEDVVLDTRYAYPEYGLPNDGTLEAIRLCARLEGVLTDPVYEGKSMHGMIDMVRNGEFPEGSKVLYAHLGGVPALNAYSFLFKDG</sequence>
<name>1A1D_PSESM</name>
<gene>
    <name evidence="1" type="primary">acdS</name>
    <name type="ordered locus">PSPTO_3675</name>
</gene>
<dbReference type="EC" id="3.5.99.7" evidence="1"/>
<dbReference type="EMBL" id="AE016853">
    <property type="protein sequence ID" value="AAO57144.1"/>
    <property type="molecule type" value="Genomic_DNA"/>
</dbReference>
<dbReference type="RefSeq" id="NP_793449.1">
    <property type="nucleotide sequence ID" value="NC_004578.1"/>
</dbReference>
<dbReference type="RefSeq" id="WP_003376162.1">
    <property type="nucleotide sequence ID" value="NC_004578.1"/>
</dbReference>
<dbReference type="SMR" id="Q87YW7"/>
<dbReference type="STRING" id="223283.PSPTO_3675"/>
<dbReference type="GeneID" id="1185340"/>
<dbReference type="KEGG" id="pst:PSPTO_3675"/>
<dbReference type="PATRIC" id="fig|223283.9.peg.3766"/>
<dbReference type="eggNOG" id="COG2515">
    <property type="taxonomic scope" value="Bacteria"/>
</dbReference>
<dbReference type="HOGENOM" id="CLU_048897_2_1_6"/>
<dbReference type="OrthoDB" id="9801249at2"/>
<dbReference type="PhylomeDB" id="Q87YW7"/>
<dbReference type="Proteomes" id="UP000002515">
    <property type="component" value="Chromosome"/>
</dbReference>
<dbReference type="GO" id="GO:0008660">
    <property type="term" value="F:1-aminocyclopropane-1-carboxylate deaminase activity"/>
    <property type="evidence" value="ECO:0007669"/>
    <property type="project" value="UniProtKB-UniRule"/>
</dbReference>
<dbReference type="GO" id="GO:0019148">
    <property type="term" value="F:D-cysteine desulfhydrase activity"/>
    <property type="evidence" value="ECO:0007669"/>
    <property type="project" value="TreeGrafter"/>
</dbReference>
<dbReference type="GO" id="GO:0030170">
    <property type="term" value="F:pyridoxal phosphate binding"/>
    <property type="evidence" value="ECO:0007669"/>
    <property type="project" value="InterPro"/>
</dbReference>
<dbReference type="GO" id="GO:0018871">
    <property type="term" value="P:1-aminocyclopropane-1-carboxylate metabolic process"/>
    <property type="evidence" value="ECO:0007669"/>
    <property type="project" value="UniProtKB-UniRule"/>
</dbReference>
<dbReference type="GO" id="GO:0009310">
    <property type="term" value="P:amine catabolic process"/>
    <property type="evidence" value="ECO:0007669"/>
    <property type="project" value="InterPro"/>
</dbReference>
<dbReference type="CDD" id="cd06449">
    <property type="entry name" value="ACCD"/>
    <property type="match status" value="1"/>
</dbReference>
<dbReference type="FunFam" id="3.40.50.1100:FF:000048">
    <property type="entry name" value="1-aminocyclopropane-1-carboxylate deaminase"/>
    <property type="match status" value="1"/>
</dbReference>
<dbReference type="FunFam" id="3.40.50.1100:FF:000053">
    <property type="entry name" value="1-aminocyclopropane-1-carboxylate deaminase"/>
    <property type="match status" value="1"/>
</dbReference>
<dbReference type="Gene3D" id="3.40.50.1100">
    <property type="match status" value="2"/>
</dbReference>
<dbReference type="HAMAP" id="MF_00807">
    <property type="entry name" value="ACC_deaminase"/>
    <property type="match status" value="1"/>
</dbReference>
<dbReference type="InterPro" id="IPR027278">
    <property type="entry name" value="ACCD_DCysDesulf"/>
</dbReference>
<dbReference type="InterPro" id="IPR005965">
    <property type="entry name" value="ACP_carboxylate_deaminase"/>
</dbReference>
<dbReference type="InterPro" id="IPR020601">
    <property type="entry name" value="ACP_carboxylate_deaminase_bac"/>
</dbReference>
<dbReference type="InterPro" id="IPR001926">
    <property type="entry name" value="TrpB-like_PALP"/>
</dbReference>
<dbReference type="InterPro" id="IPR036052">
    <property type="entry name" value="TrpB-like_PALP_sf"/>
</dbReference>
<dbReference type="NCBIfam" id="TIGR01274">
    <property type="entry name" value="ACC_deam"/>
    <property type="match status" value="1"/>
</dbReference>
<dbReference type="PANTHER" id="PTHR43780">
    <property type="entry name" value="1-AMINOCYCLOPROPANE-1-CARBOXYLATE DEAMINASE-RELATED"/>
    <property type="match status" value="1"/>
</dbReference>
<dbReference type="PANTHER" id="PTHR43780:SF2">
    <property type="entry name" value="1-AMINOCYCLOPROPANE-1-CARBOXYLATE DEAMINASE-RELATED"/>
    <property type="match status" value="1"/>
</dbReference>
<dbReference type="Pfam" id="PF00291">
    <property type="entry name" value="PALP"/>
    <property type="match status" value="1"/>
</dbReference>
<dbReference type="PIRSF" id="PIRSF006278">
    <property type="entry name" value="ACCD_DCysDesulf"/>
    <property type="match status" value="1"/>
</dbReference>
<dbReference type="SUPFAM" id="SSF53686">
    <property type="entry name" value="Tryptophan synthase beta subunit-like PLP-dependent enzymes"/>
    <property type="match status" value="1"/>
</dbReference>
<proteinExistence type="inferred from homology"/>
<feature type="chain" id="PRO_0000184504" description="1-aminocyclopropane-1-carboxylate deaminase">
    <location>
        <begin position="1"/>
        <end position="338"/>
    </location>
</feature>
<feature type="active site" description="Nucleophile" evidence="1">
    <location>
        <position position="78"/>
    </location>
</feature>
<feature type="modified residue" description="N6-(pyridoxal phosphate)lysine" evidence="1">
    <location>
        <position position="51"/>
    </location>
</feature>
<reference key="1">
    <citation type="journal article" date="2003" name="Proc. Natl. Acad. Sci. U.S.A.">
        <title>The complete genome sequence of the Arabidopsis and tomato pathogen Pseudomonas syringae pv. tomato DC3000.</title>
        <authorList>
            <person name="Buell C.R."/>
            <person name="Joardar V."/>
            <person name="Lindeberg M."/>
            <person name="Selengut J."/>
            <person name="Paulsen I.T."/>
            <person name="Gwinn M.L."/>
            <person name="Dodson R.J."/>
            <person name="DeBoy R.T."/>
            <person name="Durkin A.S."/>
            <person name="Kolonay J.F."/>
            <person name="Madupu R."/>
            <person name="Daugherty S.C."/>
            <person name="Brinkac L.M."/>
            <person name="Beanan M.J."/>
            <person name="Haft D.H."/>
            <person name="Nelson W.C."/>
            <person name="Davidsen T.M."/>
            <person name="Zafar N."/>
            <person name="Zhou L."/>
            <person name="Liu J."/>
            <person name="Yuan Q."/>
            <person name="Khouri H.M."/>
            <person name="Fedorova N.B."/>
            <person name="Tran B."/>
            <person name="Russell D."/>
            <person name="Berry K.J."/>
            <person name="Utterback T.R."/>
            <person name="Van Aken S.E."/>
            <person name="Feldblyum T.V."/>
            <person name="D'Ascenzo M."/>
            <person name="Deng W.-L."/>
            <person name="Ramos A.R."/>
            <person name="Alfano J.R."/>
            <person name="Cartinhour S."/>
            <person name="Chatterjee A.K."/>
            <person name="Delaney T.P."/>
            <person name="Lazarowitz S.G."/>
            <person name="Martin G.B."/>
            <person name="Schneider D.J."/>
            <person name="Tang X."/>
            <person name="Bender C.L."/>
            <person name="White O."/>
            <person name="Fraser C.M."/>
            <person name="Collmer A."/>
        </authorList>
    </citation>
    <scope>NUCLEOTIDE SEQUENCE [LARGE SCALE GENOMIC DNA]</scope>
    <source>
        <strain>ATCC BAA-871 / DC3000</strain>
    </source>
</reference>
<protein>
    <recommendedName>
        <fullName evidence="1">1-aminocyclopropane-1-carboxylate deaminase</fullName>
        <shortName evidence="1">ACC deaminase</shortName>
        <shortName evidence="1">ACCD</shortName>
        <ecNumber evidence="1">3.5.99.7</ecNumber>
    </recommendedName>
</protein>